<feature type="signal peptide">
    <location>
        <begin position="1"/>
        <end position="25"/>
    </location>
</feature>
<feature type="chain" id="PRO_0000014561" description="B-cell antigen receptor complex-associated protein beta chain">
    <location>
        <begin position="26"/>
        <end position="228"/>
    </location>
</feature>
<feature type="topological domain" description="Extracellular" evidence="2">
    <location>
        <begin position="26"/>
        <end position="158"/>
    </location>
</feature>
<feature type="transmembrane region" description="Helical" evidence="2">
    <location>
        <begin position="159"/>
        <end position="180"/>
    </location>
</feature>
<feature type="topological domain" description="Cytoplasmic" evidence="2">
    <location>
        <begin position="181"/>
        <end position="228"/>
    </location>
</feature>
<feature type="domain" description="Ig-like V-type">
    <location>
        <begin position="41"/>
        <end position="132"/>
    </location>
</feature>
<feature type="domain" description="ITAM" evidence="4">
    <location>
        <begin position="184"/>
        <end position="212"/>
    </location>
</feature>
<feature type="modified residue" description="Phosphotyrosine; by SRC-type Tyr-kinases" evidence="4 13">
    <location>
        <position position="195"/>
    </location>
</feature>
<feature type="modified residue" description="Phosphotyrosine; by SRC-type Tyr-kinases" evidence="4 13">
    <location>
        <position position="206"/>
    </location>
</feature>
<feature type="glycosylation site" description="N-linked (GlcNAc...) asparagine" evidence="2">
    <location>
        <position position="68"/>
    </location>
</feature>
<feature type="glycosylation site" description="N-linked (GlcNAc...) asparagine" evidence="2">
    <location>
        <position position="99"/>
    </location>
</feature>
<feature type="glycosylation site" description="N-linked (GlcNAc...) asparagine" evidence="2">
    <location>
        <position position="130"/>
    </location>
</feature>
<feature type="disulfide bond" evidence="3 12">
    <location>
        <begin position="43"/>
        <end position="124"/>
    </location>
</feature>
<feature type="disulfide bond" evidence="3 12">
    <location>
        <begin position="65"/>
        <end position="120"/>
    </location>
</feature>
<feature type="disulfide bond" description="Interchain (with C-113 in alpha chain)" evidence="3 12">
    <location>
        <position position="135"/>
    </location>
</feature>
<feature type="strand" evidence="17">
    <location>
        <begin position="45"/>
        <end position="49"/>
    </location>
</feature>
<feature type="strand" evidence="17">
    <location>
        <begin position="51"/>
        <end position="56"/>
    </location>
</feature>
<feature type="strand" evidence="17">
    <location>
        <begin position="61"/>
        <end position="71"/>
    </location>
</feature>
<feature type="strand" evidence="17">
    <location>
        <begin position="73"/>
        <end position="78"/>
    </location>
</feature>
<feature type="strand" evidence="16">
    <location>
        <begin position="84"/>
        <end position="86"/>
    </location>
</feature>
<feature type="turn" evidence="17">
    <location>
        <begin position="90"/>
        <end position="93"/>
    </location>
</feature>
<feature type="strand" evidence="17">
    <location>
        <begin position="94"/>
        <end position="99"/>
    </location>
</feature>
<feature type="strand" evidence="17">
    <location>
        <begin position="102"/>
        <end position="107"/>
    </location>
</feature>
<feature type="helix" evidence="17">
    <location>
        <begin position="112"/>
        <end position="114"/>
    </location>
</feature>
<feature type="strand" evidence="17">
    <location>
        <begin position="116"/>
        <end position="124"/>
    </location>
</feature>
<feature type="strand" evidence="16">
    <location>
        <begin position="131"/>
        <end position="134"/>
    </location>
</feature>
<feature type="strand" evidence="17">
    <location>
        <begin position="137"/>
        <end position="142"/>
    </location>
</feature>
<name>CD79B_MOUSE</name>
<comment type="function">
    <text evidence="5 8 11 14">Required in cooperation with CD79A for initiation of the signal transduction cascade activated by the B-cell antigen receptor complex (BCR) which leads to internalization of the complex, trafficking to late endosomes and antigen presentation. Enhances phosphorylation of CD79A, possibly by recruiting kinases which phosphorylate CD79A or by recruiting proteins which bind to CD79A and protect it from dephosphorylation.</text>
</comment>
<comment type="subunit">
    <text evidence="9 10 12 13 15">Heterodimer of alpha and beta chains; disulfide-linked. Part of the B-cell antigen receptor complex where the alpha/beta chain heterodimer is non-covalently associated with an antigen-specific membrane-bound surface immunoglobulin of two heavy chains and two light chains. Interacts with LYN.</text>
</comment>
<comment type="interaction">
    <interactant intactId="EBI-15869050">
        <id>P15530</id>
    </interactant>
    <interactant intactId="EBI-15869050">
        <id>P15530</id>
        <label>Cd79b</label>
    </interactant>
    <organismsDiffer>false</organismsDiffer>
    <experiments>3</experiments>
</comment>
<comment type="subcellular location">
    <subcellularLocation>
        <location evidence="6 7 11">Cell membrane</location>
        <topology evidence="6 7 11">Single-pass type I membrane protein</topology>
    </subcellularLocation>
    <text>Following antigen binding, the BCR has been shown to translocate from detergent-soluble regions of the cell membrane to lipid rafts although signal transduction through the complex can also occur outside lipid rafts.</text>
</comment>
<comment type="tissue specificity">
    <text>B-cells.</text>
</comment>
<comment type="domain">
    <text evidence="1">The transmembrane helices of CD79A and CD79B chains and two IgM heavy chains assembly in a four-helix bundle structure that appears to be conserved among different BCR isotypes.</text>
</comment>
<comment type="PTM">
    <text evidence="10 13">Phosphorylated on tyrosine upon B-cell activation by SRC-type Tyr-kinases such as BLK, LYN and SYK.</text>
</comment>
<proteinExistence type="evidence at protein level"/>
<sequence>MATLVLSSMPCHWLLFLLLLFSGEPVPAMTSSDLPLNFQGSPCSQIWQHPRFAAKKRSSMVKFHCYTNHSGALTWFRKRGSQQPQELVSEEGRIVQTQNGSVYTLTIQNIQYEDNGIYFCKQKCDSANHNVTDSCGTELLVLGFSTLDQLKRRNTLKDGIILIQTLLIILFIIVPIFLLLDKDDGKAGMEEDHTYEGLNIDQTATYEDIVTLRTGEVKWSVGEHPGQE</sequence>
<reference key="1">
    <citation type="journal article" date="1988" name="Proc. Natl. Acad. Sci. U.S.A.">
        <title>B29: a member of the immunoglobulin gene superfamily exclusively expressed on beta-lineage cells.</title>
        <authorList>
            <person name="Hermanson G.G."/>
            <person name="Eisenberg D."/>
            <person name="Kincade P.W."/>
            <person name="Wall R."/>
        </authorList>
    </citation>
    <scope>NUCLEOTIDE SEQUENCE [MRNA]</scope>
    <source>
        <tissue>B-cell</tissue>
    </source>
</reference>
<reference key="2">
    <citation type="journal article" date="2005" name="Science">
        <title>The transcriptional landscape of the mammalian genome.</title>
        <authorList>
            <person name="Carninci P."/>
            <person name="Kasukawa T."/>
            <person name="Katayama S."/>
            <person name="Gough J."/>
            <person name="Frith M.C."/>
            <person name="Maeda N."/>
            <person name="Oyama R."/>
            <person name="Ravasi T."/>
            <person name="Lenhard B."/>
            <person name="Wells C."/>
            <person name="Kodzius R."/>
            <person name="Shimokawa K."/>
            <person name="Bajic V.B."/>
            <person name="Brenner S.E."/>
            <person name="Batalov S."/>
            <person name="Forrest A.R."/>
            <person name="Zavolan M."/>
            <person name="Davis M.J."/>
            <person name="Wilming L.G."/>
            <person name="Aidinis V."/>
            <person name="Allen J.E."/>
            <person name="Ambesi-Impiombato A."/>
            <person name="Apweiler R."/>
            <person name="Aturaliya R.N."/>
            <person name="Bailey T.L."/>
            <person name="Bansal M."/>
            <person name="Baxter L."/>
            <person name="Beisel K.W."/>
            <person name="Bersano T."/>
            <person name="Bono H."/>
            <person name="Chalk A.M."/>
            <person name="Chiu K.P."/>
            <person name="Choudhary V."/>
            <person name="Christoffels A."/>
            <person name="Clutterbuck D.R."/>
            <person name="Crowe M.L."/>
            <person name="Dalla E."/>
            <person name="Dalrymple B.P."/>
            <person name="de Bono B."/>
            <person name="Della Gatta G."/>
            <person name="di Bernardo D."/>
            <person name="Down T."/>
            <person name="Engstrom P."/>
            <person name="Fagiolini M."/>
            <person name="Faulkner G."/>
            <person name="Fletcher C.F."/>
            <person name="Fukushima T."/>
            <person name="Furuno M."/>
            <person name="Futaki S."/>
            <person name="Gariboldi M."/>
            <person name="Georgii-Hemming P."/>
            <person name="Gingeras T.R."/>
            <person name="Gojobori T."/>
            <person name="Green R.E."/>
            <person name="Gustincich S."/>
            <person name="Harbers M."/>
            <person name="Hayashi Y."/>
            <person name="Hensch T.K."/>
            <person name="Hirokawa N."/>
            <person name="Hill D."/>
            <person name="Huminiecki L."/>
            <person name="Iacono M."/>
            <person name="Ikeo K."/>
            <person name="Iwama A."/>
            <person name="Ishikawa T."/>
            <person name="Jakt M."/>
            <person name="Kanapin A."/>
            <person name="Katoh M."/>
            <person name="Kawasawa Y."/>
            <person name="Kelso J."/>
            <person name="Kitamura H."/>
            <person name="Kitano H."/>
            <person name="Kollias G."/>
            <person name="Krishnan S.P."/>
            <person name="Kruger A."/>
            <person name="Kummerfeld S.K."/>
            <person name="Kurochkin I.V."/>
            <person name="Lareau L.F."/>
            <person name="Lazarevic D."/>
            <person name="Lipovich L."/>
            <person name="Liu J."/>
            <person name="Liuni S."/>
            <person name="McWilliam S."/>
            <person name="Madan Babu M."/>
            <person name="Madera M."/>
            <person name="Marchionni L."/>
            <person name="Matsuda H."/>
            <person name="Matsuzawa S."/>
            <person name="Miki H."/>
            <person name="Mignone F."/>
            <person name="Miyake S."/>
            <person name="Morris K."/>
            <person name="Mottagui-Tabar S."/>
            <person name="Mulder N."/>
            <person name="Nakano N."/>
            <person name="Nakauchi H."/>
            <person name="Ng P."/>
            <person name="Nilsson R."/>
            <person name="Nishiguchi S."/>
            <person name="Nishikawa S."/>
            <person name="Nori F."/>
            <person name="Ohara O."/>
            <person name="Okazaki Y."/>
            <person name="Orlando V."/>
            <person name="Pang K.C."/>
            <person name="Pavan W.J."/>
            <person name="Pavesi G."/>
            <person name="Pesole G."/>
            <person name="Petrovsky N."/>
            <person name="Piazza S."/>
            <person name="Reed J."/>
            <person name="Reid J.F."/>
            <person name="Ring B.Z."/>
            <person name="Ringwald M."/>
            <person name="Rost B."/>
            <person name="Ruan Y."/>
            <person name="Salzberg S.L."/>
            <person name="Sandelin A."/>
            <person name="Schneider C."/>
            <person name="Schoenbach C."/>
            <person name="Sekiguchi K."/>
            <person name="Semple C.A."/>
            <person name="Seno S."/>
            <person name="Sessa L."/>
            <person name="Sheng Y."/>
            <person name="Shibata Y."/>
            <person name="Shimada H."/>
            <person name="Shimada K."/>
            <person name="Silva D."/>
            <person name="Sinclair B."/>
            <person name="Sperling S."/>
            <person name="Stupka E."/>
            <person name="Sugiura K."/>
            <person name="Sultana R."/>
            <person name="Takenaka Y."/>
            <person name="Taki K."/>
            <person name="Tammoja K."/>
            <person name="Tan S.L."/>
            <person name="Tang S."/>
            <person name="Taylor M.S."/>
            <person name="Tegner J."/>
            <person name="Teichmann S.A."/>
            <person name="Ueda H.R."/>
            <person name="van Nimwegen E."/>
            <person name="Verardo R."/>
            <person name="Wei C.L."/>
            <person name="Yagi K."/>
            <person name="Yamanishi H."/>
            <person name="Zabarovsky E."/>
            <person name="Zhu S."/>
            <person name="Zimmer A."/>
            <person name="Hide W."/>
            <person name="Bult C."/>
            <person name="Grimmond S.M."/>
            <person name="Teasdale R.D."/>
            <person name="Liu E.T."/>
            <person name="Brusic V."/>
            <person name="Quackenbush J."/>
            <person name="Wahlestedt C."/>
            <person name="Mattick J.S."/>
            <person name="Hume D.A."/>
            <person name="Kai C."/>
            <person name="Sasaki D."/>
            <person name="Tomaru Y."/>
            <person name="Fukuda S."/>
            <person name="Kanamori-Katayama M."/>
            <person name="Suzuki M."/>
            <person name="Aoki J."/>
            <person name="Arakawa T."/>
            <person name="Iida J."/>
            <person name="Imamura K."/>
            <person name="Itoh M."/>
            <person name="Kato T."/>
            <person name="Kawaji H."/>
            <person name="Kawagashira N."/>
            <person name="Kawashima T."/>
            <person name="Kojima M."/>
            <person name="Kondo S."/>
            <person name="Konno H."/>
            <person name="Nakano K."/>
            <person name="Ninomiya N."/>
            <person name="Nishio T."/>
            <person name="Okada M."/>
            <person name="Plessy C."/>
            <person name="Shibata K."/>
            <person name="Shiraki T."/>
            <person name="Suzuki S."/>
            <person name="Tagami M."/>
            <person name="Waki K."/>
            <person name="Watahiki A."/>
            <person name="Okamura-Oho Y."/>
            <person name="Suzuki H."/>
            <person name="Kawai J."/>
            <person name="Hayashizaki Y."/>
        </authorList>
    </citation>
    <scope>NUCLEOTIDE SEQUENCE [LARGE SCALE MRNA]</scope>
    <source>
        <strain>C57BL/6J</strain>
        <tissue>Spleen</tissue>
    </source>
</reference>
<reference key="3">
    <citation type="submission" date="2005-07" db="EMBL/GenBank/DDBJ databases">
        <title>Cloning of mouse full open reading frames in Gateway(R) system entry vector (pDONR201).</title>
        <authorList>
            <person name="Ebert L."/>
            <person name="Muenstermann E."/>
            <person name="Schatten R."/>
            <person name="Henze S."/>
            <person name="Bohn E."/>
            <person name="Mollenhauer J."/>
            <person name="Wiemann S."/>
            <person name="Schick M."/>
            <person name="Korn B."/>
        </authorList>
    </citation>
    <scope>NUCLEOTIDE SEQUENCE [LARGE SCALE MRNA]</scope>
</reference>
<reference key="4">
    <citation type="journal article" date="2004" name="Genome Res.">
        <title>The status, quality, and expansion of the NIH full-length cDNA project: the Mammalian Gene Collection (MGC).</title>
        <authorList>
            <consortium name="The MGC Project Team"/>
        </authorList>
    </citation>
    <scope>NUCLEOTIDE SEQUENCE [LARGE SCALE MRNA]</scope>
    <source>
        <strain>FVB/N</strain>
        <tissue>Salivary gland</tissue>
    </source>
</reference>
<reference key="5">
    <citation type="journal article" date="1989" name="Proc. Natl. Acad. Sci. U.S.A.">
        <title>Immunoglobulin enhancer and promoter motifs 5' of the B29 B-cell-specific gene.</title>
        <authorList>
            <person name="Hermanson G.G."/>
            <person name="Briskin M."/>
            <person name="Sigman D."/>
            <person name="Wall R."/>
        </authorList>
    </citation>
    <scope>NUCLEOTIDE SEQUENCE [GENOMIC DNA] OF 1-17</scope>
</reference>
<reference key="6">
    <citation type="journal article" date="1992" name="J. Immunol.">
        <title>The MB-1/B29 heterodimer couples the B cell antigen receptor to multiple src family protein tyrosine kinases.</title>
        <authorList>
            <person name="Lin J."/>
            <person name="Justement L.B."/>
        </authorList>
    </citation>
    <scope>INTERACTION WITH BLK</scope>
</reference>
<reference key="7">
    <citation type="journal article" date="1993" name="Curr. Biol.">
        <title>B-cell antigen receptor motifs have redundant signalling capabilities and bind the tyrosine kinases PTK72, Lyn and Fyn.</title>
        <authorList>
            <person name="Law D.A."/>
            <person name="Chan V.W."/>
            <person name="Datta S.K."/>
            <person name="DeFranco A.L."/>
        </authorList>
    </citation>
    <scope>INTERACTION WITH LYN</scope>
    <scope>PHOSPHORYLATION</scope>
</reference>
<reference key="8">
    <citation type="journal article" date="1994" name="J. Biol. Chem.">
        <title>Activation of B- and T-cells by the cytoplasmic domains of the B-cell antigen receptor proteins Ig-alpha and Ig-beta.</title>
        <authorList>
            <person name="Taddie J.A."/>
            <person name="Hurley T.R."/>
            <person name="Hardwick B.S."/>
            <person name="Sefton B.M."/>
        </authorList>
    </citation>
    <scope>FUNCTION</scope>
</reference>
<reference key="9">
    <citation type="journal article" date="1995" name="J. Biol. Chem.">
        <title>Reconstitution of the B cell antigen receptor signaling components in COS cells.</title>
        <authorList>
            <person name="Saouaf S.J."/>
            <person name="Kut S.A."/>
            <person name="Fargnoli J."/>
            <person name="Rowley R.B."/>
            <person name="Bolen J.B."/>
            <person name="Mahajan S."/>
        </authorList>
    </citation>
    <scope>INTERACTION WITH BLK</scope>
    <scope>PHOSPHORYLATION AT TYR-195 AND TYR-206</scope>
</reference>
<reference key="10">
    <citation type="journal article" date="1996" name="J. Exp. Med.">
        <title>The two membrane isoforms of human IgE assemble into functionally distinct B cell antigen receptors.</title>
        <authorList>
            <person name="Batista F.D."/>
            <person name="Anand S."/>
            <person name="Presani G."/>
            <person name="Efremov D.G."/>
            <person name="Burrone O.R."/>
        </authorList>
    </citation>
    <scope>SUBUNIT</scope>
</reference>
<reference key="11">
    <citation type="journal article" date="1999" name="J. Exp. Med.">
        <title>A role for lipid rafts in B cell antigen receptor signaling and antigen targeting.</title>
        <authorList>
            <person name="Cheng P.C."/>
            <person name="Dykstra M.L."/>
            <person name="Mitchell R.N."/>
            <person name="Pierce S.K."/>
        </authorList>
    </citation>
    <scope>SUBCELLULAR LOCATION</scope>
</reference>
<reference key="12">
    <citation type="journal article" date="1999" name="J. Immunol.">
        <title>Ig alpha and Ig beta are required for efficient trafficking to late endosomes and to enhance antigen presentation.</title>
        <authorList>
            <person name="Siemasko K."/>
            <person name="Eisfelder B.J."/>
            <person name="Stebbins C."/>
            <person name="Kabak S."/>
            <person name="Sant A.J."/>
            <person name="Song W."/>
            <person name="Clark M.R."/>
        </authorList>
    </citation>
    <scope>FUNCTION</scope>
</reference>
<reference key="13">
    <citation type="journal article" date="2001" name="J. Immunol.">
        <title>Translocation of the B cell antigen receptor into lipid rafts reveals a novel step in signaling.</title>
        <authorList>
            <person name="Cheng P.C."/>
            <person name="Brown B.K."/>
            <person name="Song W."/>
            <person name="Pierce S.K."/>
        </authorList>
    </citation>
    <scope>SUBCELLULAR LOCATION</scope>
</reference>
<reference key="14">
    <citation type="journal article" date="2002" name="Int. Immunol.">
        <title>Cooperative interaction of Ig(alpha) and Ig(beta) of the BCR regulates the kinetics and specificity of antigen targeting.</title>
        <authorList>
            <person name="Li C."/>
            <person name="Siemasko K."/>
            <person name="Clark M.R."/>
            <person name="Song W."/>
        </authorList>
    </citation>
    <scope>FUNCTION</scope>
</reference>
<reference key="15">
    <citation type="journal article" date="2005" name="J. Immunol.">
        <title>Ig alpha/Ig beta complexes generate signals for B cell development independent of selective plasma membrane compartmentalization.</title>
        <authorList>
            <person name="Fuentes-Panana E.M."/>
            <person name="Bannish G."/>
            <person name="van der Voort D."/>
            <person name="King L.B."/>
            <person name="Monroe J.G."/>
        </authorList>
    </citation>
    <scope>FUNCTION</scope>
    <scope>SUBCELLULAR LOCATION</scope>
</reference>
<reference key="16">
    <citation type="journal article" date="2010" name="Cell">
        <title>A tissue-specific atlas of mouse protein phosphorylation and expression.</title>
        <authorList>
            <person name="Huttlin E.L."/>
            <person name="Jedrychowski M.P."/>
            <person name="Elias J.E."/>
            <person name="Goswami T."/>
            <person name="Rad R."/>
            <person name="Beausoleil S.A."/>
            <person name="Villen J."/>
            <person name="Haas W."/>
            <person name="Sowa M.E."/>
            <person name="Gygi S.P."/>
        </authorList>
    </citation>
    <scope>IDENTIFICATION BY MASS SPECTROMETRY [LARGE SCALE ANALYSIS]</scope>
    <source>
        <tissue>Lung</tissue>
        <tissue>Spleen</tissue>
    </source>
</reference>
<reference key="17">
    <citation type="journal article" date="2010" name="Structure">
        <title>Structural and functional studies of Igalphabeta and its assembly with the B cell antigen receptor.</title>
        <authorList>
            <person name="Radaev S."/>
            <person name="Zou Z."/>
            <person name="Tolar P."/>
            <person name="Nguyen K."/>
            <person name="Nguyen A."/>
            <person name="Krueger P.D."/>
            <person name="Stutzman N."/>
            <person name="Pierce S."/>
            <person name="Sun P.D."/>
        </authorList>
    </citation>
    <scope>X-RAY CRYSTALLOGRAPHY (1.7 ANGSTROMS) OF 27-159</scope>
    <scope>SUBUNIT</scope>
    <scope>DISULFIDE BONDS</scope>
</reference>
<dbReference type="EMBL" id="J03857">
    <property type="protein sequence ID" value="AAA37274.1"/>
    <property type="molecule type" value="mRNA"/>
</dbReference>
<dbReference type="EMBL" id="AK143573">
    <property type="protein sequence ID" value="BAE25444.1"/>
    <property type="molecule type" value="mRNA"/>
</dbReference>
<dbReference type="EMBL" id="CT010358">
    <property type="protein sequence ID" value="CAJ18566.1"/>
    <property type="molecule type" value="mRNA"/>
</dbReference>
<dbReference type="EMBL" id="BC012226">
    <property type="protein sequence ID" value="AAH12226.1"/>
    <property type="molecule type" value="mRNA"/>
</dbReference>
<dbReference type="EMBL" id="AF002279">
    <property type="protein sequence ID" value="AAB93965.1"/>
    <property type="molecule type" value="Genomic_DNA"/>
</dbReference>
<dbReference type="CCDS" id="CCDS48960.1"/>
<dbReference type="PIR" id="B60228">
    <property type="entry name" value="B60228"/>
</dbReference>
<dbReference type="RefSeq" id="NP_001300868.1">
    <property type="nucleotide sequence ID" value="NM_001313939.1"/>
</dbReference>
<dbReference type="RefSeq" id="NP_032365.1">
    <property type="nucleotide sequence ID" value="NM_008339.4"/>
</dbReference>
<dbReference type="PDB" id="3KHO">
    <property type="method" value="X-ray"/>
    <property type="resolution" value="3.11 A"/>
    <property type="chains" value="A/B=27-159"/>
</dbReference>
<dbReference type="PDB" id="3KHQ">
    <property type="method" value="X-ray"/>
    <property type="resolution" value="1.70 A"/>
    <property type="chains" value="A=27-159"/>
</dbReference>
<dbReference type="PDB" id="8E4C">
    <property type="method" value="EM"/>
    <property type="resolution" value="4.00 A"/>
    <property type="chains" value="D=1-228"/>
</dbReference>
<dbReference type="PDB" id="8EMA">
    <property type="method" value="EM"/>
    <property type="resolution" value="8.20 A"/>
    <property type="chains" value="D=1-228"/>
</dbReference>
<dbReference type="PDBsum" id="3KHO"/>
<dbReference type="PDBsum" id="3KHQ"/>
<dbReference type="PDBsum" id="8E4C"/>
<dbReference type="PDBsum" id="8EMA"/>
<dbReference type="EMDB" id="EMD-27888"/>
<dbReference type="SMR" id="P15530"/>
<dbReference type="BioGRID" id="200546">
    <property type="interactions" value="3"/>
</dbReference>
<dbReference type="DIP" id="DIP-59498N"/>
<dbReference type="ELM" id="P15530"/>
<dbReference type="FunCoup" id="P15530">
    <property type="interactions" value="496"/>
</dbReference>
<dbReference type="STRING" id="10090.ENSMUSP00000129029"/>
<dbReference type="GlyCosmos" id="P15530">
    <property type="glycosylation" value="3 sites, No reported glycans"/>
</dbReference>
<dbReference type="GlyGen" id="P15530">
    <property type="glycosylation" value="3 sites"/>
</dbReference>
<dbReference type="iPTMnet" id="P15530"/>
<dbReference type="PhosphoSitePlus" id="P15530"/>
<dbReference type="PaxDb" id="10090-ENSMUSP00000048239"/>
<dbReference type="ProteomicsDB" id="280028"/>
<dbReference type="ABCD" id="P15530">
    <property type="antibodies" value="2 sequenced antibodies"/>
</dbReference>
<dbReference type="Antibodypedia" id="2218">
    <property type="antibodies" value="1129 antibodies from 43 providers"/>
</dbReference>
<dbReference type="DNASU" id="15985"/>
<dbReference type="Ensembl" id="ENSMUST00000167143.2">
    <property type="protein sequence ID" value="ENSMUSP00000129029.2"/>
    <property type="gene ID" value="ENSMUSG00000040592.12"/>
</dbReference>
<dbReference type="GeneID" id="15985"/>
<dbReference type="KEGG" id="mmu:15985"/>
<dbReference type="UCSC" id="uc007lyt.2">
    <property type="organism name" value="mouse"/>
</dbReference>
<dbReference type="AGR" id="MGI:96431"/>
<dbReference type="CTD" id="974"/>
<dbReference type="MGI" id="MGI:96431">
    <property type="gene designation" value="Cd79b"/>
</dbReference>
<dbReference type="VEuPathDB" id="HostDB:ENSMUSG00000040592"/>
<dbReference type="eggNOG" id="ENOG502S7X8">
    <property type="taxonomic scope" value="Eukaryota"/>
</dbReference>
<dbReference type="GeneTree" id="ENSGT00940000154363"/>
<dbReference type="InParanoid" id="P15530"/>
<dbReference type="OMA" id="PVHFICY"/>
<dbReference type="OrthoDB" id="84845at9989"/>
<dbReference type="Reactome" id="R-MMU-5690714">
    <property type="pathway name" value="CD22 mediated BCR regulation"/>
</dbReference>
<dbReference type="Reactome" id="R-MMU-983695">
    <property type="pathway name" value="Antigen activates B Cell Receptor (BCR) leading to generation of second messengers"/>
</dbReference>
<dbReference type="BioGRID-ORCS" id="15985">
    <property type="hits" value="3 hits in 79 CRISPR screens"/>
</dbReference>
<dbReference type="ChiTaRS" id="Cd79b">
    <property type="organism name" value="mouse"/>
</dbReference>
<dbReference type="EvolutionaryTrace" id="P15530"/>
<dbReference type="PRO" id="PR:P15530"/>
<dbReference type="Proteomes" id="UP000000589">
    <property type="component" value="Chromosome 11"/>
</dbReference>
<dbReference type="RNAct" id="P15530">
    <property type="molecule type" value="protein"/>
</dbReference>
<dbReference type="Bgee" id="ENSMUSG00000040592">
    <property type="expression patterns" value="Expressed in peripheral lymph node and 93 other cell types or tissues"/>
</dbReference>
<dbReference type="ExpressionAtlas" id="P15530">
    <property type="expression patterns" value="baseline and differential"/>
</dbReference>
<dbReference type="GO" id="GO:0019815">
    <property type="term" value="C:B cell receptor complex"/>
    <property type="evidence" value="ECO:0000314"/>
    <property type="project" value="MGI"/>
</dbReference>
<dbReference type="GO" id="GO:0009897">
    <property type="term" value="C:external side of plasma membrane"/>
    <property type="evidence" value="ECO:0000314"/>
    <property type="project" value="MGI"/>
</dbReference>
<dbReference type="GO" id="GO:0071755">
    <property type="term" value="C:IgM B cell receptor complex"/>
    <property type="evidence" value="ECO:0000250"/>
    <property type="project" value="UniProtKB"/>
</dbReference>
<dbReference type="GO" id="GO:0005886">
    <property type="term" value="C:plasma membrane"/>
    <property type="evidence" value="ECO:0000304"/>
    <property type="project" value="Reactome"/>
</dbReference>
<dbReference type="GO" id="GO:0042802">
    <property type="term" value="F:identical protein binding"/>
    <property type="evidence" value="ECO:0000353"/>
    <property type="project" value="IntAct"/>
</dbReference>
<dbReference type="GO" id="GO:0004888">
    <property type="term" value="F:transmembrane signaling receptor activity"/>
    <property type="evidence" value="ECO:0000314"/>
    <property type="project" value="MGI"/>
</dbReference>
<dbReference type="GO" id="GO:0002250">
    <property type="term" value="P:adaptive immune response"/>
    <property type="evidence" value="ECO:0007669"/>
    <property type="project" value="UniProtKB-KW"/>
</dbReference>
<dbReference type="GO" id="GO:0050853">
    <property type="term" value="P:B cell receptor signaling pathway"/>
    <property type="evidence" value="ECO:0000314"/>
    <property type="project" value="MGI"/>
</dbReference>
<dbReference type="GO" id="GO:0009617">
    <property type="term" value="P:response to bacterium"/>
    <property type="evidence" value="ECO:0000270"/>
    <property type="project" value="MGI"/>
</dbReference>
<dbReference type="CDD" id="cd16096">
    <property type="entry name" value="IgV_CD79b_beta"/>
    <property type="match status" value="1"/>
</dbReference>
<dbReference type="FunFam" id="2.60.40.10:FF:001554">
    <property type="entry name" value="B-cell antigen receptor complex-associated protein beta chain"/>
    <property type="match status" value="1"/>
</dbReference>
<dbReference type="Gene3D" id="2.60.40.10">
    <property type="entry name" value="Immunoglobulins"/>
    <property type="match status" value="1"/>
</dbReference>
<dbReference type="InterPro" id="IPR007110">
    <property type="entry name" value="Ig-like_dom"/>
</dbReference>
<dbReference type="InterPro" id="IPR036179">
    <property type="entry name" value="Ig-like_dom_sf"/>
</dbReference>
<dbReference type="InterPro" id="IPR013783">
    <property type="entry name" value="Ig-like_fold"/>
</dbReference>
<dbReference type="InterPro" id="IPR003599">
    <property type="entry name" value="Ig_sub"/>
</dbReference>
<dbReference type="InterPro" id="IPR013106">
    <property type="entry name" value="Ig_V-set"/>
</dbReference>
<dbReference type="InterPro" id="IPR003110">
    <property type="entry name" value="Phos_immunorcpt_sig_ITAM"/>
</dbReference>
<dbReference type="PANTHER" id="PTHR14334">
    <property type="entry name" value="B-CELL ANTIGEN RECEPTOR COMPLEX-ASSOCIATED PROTEIN"/>
    <property type="match status" value="1"/>
</dbReference>
<dbReference type="PANTHER" id="PTHR14334:SF2">
    <property type="entry name" value="B-CELL ANTIGEN RECEPTOR COMPLEX-ASSOCIATED PROTEIN BETA CHAIN"/>
    <property type="match status" value="1"/>
</dbReference>
<dbReference type="Pfam" id="PF02189">
    <property type="entry name" value="ITAM"/>
    <property type="match status" value="1"/>
</dbReference>
<dbReference type="Pfam" id="PF07686">
    <property type="entry name" value="V-set"/>
    <property type="match status" value="1"/>
</dbReference>
<dbReference type="SMART" id="SM00409">
    <property type="entry name" value="IG"/>
    <property type="match status" value="1"/>
</dbReference>
<dbReference type="SMART" id="SM00077">
    <property type="entry name" value="ITAM"/>
    <property type="match status" value="1"/>
</dbReference>
<dbReference type="SUPFAM" id="SSF48726">
    <property type="entry name" value="Immunoglobulin"/>
    <property type="match status" value="1"/>
</dbReference>
<dbReference type="PROSITE" id="PS50835">
    <property type="entry name" value="IG_LIKE"/>
    <property type="match status" value="1"/>
</dbReference>
<dbReference type="PROSITE" id="PS51055">
    <property type="entry name" value="ITAM_1"/>
    <property type="match status" value="1"/>
</dbReference>
<organism>
    <name type="scientific">Mus musculus</name>
    <name type="common">Mouse</name>
    <dbReference type="NCBI Taxonomy" id="10090"/>
    <lineage>
        <taxon>Eukaryota</taxon>
        <taxon>Metazoa</taxon>
        <taxon>Chordata</taxon>
        <taxon>Craniata</taxon>
        <taxon>Vertebrata</taxon>
        <taxon>Euteleostomi</taxon>
        <taxon>Mammalia</taxon>
        <taxon>Eutheria</taxon>
        <taxon>Euarchontoglires</taxon>
        <taxon>Glires</taxon>
        <taxon>Rodentia</taxon>
        <taxon>Myomorpha</taxon>
        <taxon>Muroidea</taxon>
        <taxon>Muridae</taxon>
        <taxon>Murinae</taxon>
        <taxon>Mus</taxon>
        <taxon>Mus</taxon>
    </lineage>
</organism>
<accession>P15530</accession>
<accession>Q4FJP4</accession>
<gene>
    <name type="primary">Cd79b</name>
    <name type="synonym">Igb</name>
</gene>
<protein>
    <recommendedName>
        <fullName>B-cell antigen receptor complex-associated protein beta chain</fullName>
    </recommendedName>
    <alternativeName>
        <fullName>B-cell-specific glycoprotein B29</fullName>
    </alternativeName>
    <alternativeName>
        <fullName>Ig-beta</fullName>
    </alternativeName>
    <alternativeName>
        <fullName>Immunoglobulin-associated B29 protein</fullName>
    </alternativeName>
    <cdAntigenName>CD79b</cdAntigenName>
</protein>
<keyword id="KW-0002">3D-structure</keyword>
<keyword id="KW-1064">Adaptive immunity</keyword>
<keyword id="KW-1003">Cell membrane</keyword>
<keyword id="KW-1015">Disulfide bond</keyword>
<keyword id="KW-0325">Glycoprotein</keyword>
<keyword id="KW-0391">Immunity</keyword>
<keyword id="KW-0393">Immunoglobulin domain</keyword>
<keyword id="KW-0472">Membrane</keyword>
<keyword id="KW-0597">Phosphoprotein</keyword>
<keyword id="KW-0675">Receptor</keyword>
<keyword id="KW-1185">Reference proteome</keyword>
<keyword id="KW-0732">Signal</keyword>
<keyword id="KW-0812">Transmembrane</keyword>
<keyword id="KW-1133">Transmembrane helix</keyword>
<evidence type="ECO:0000250" key="1">
    <source>
        <dbReference type="UniProtKB" id="P40259"/>
    </source>
</evidence>
<evidence type="ECO:0000255" key="2"/>
<evidence type="ECO:0000255" key="3">
    <source>
        <dbReference type="PROSITE-ProRule" id="PRU00114"/>
    </source>
</evidence>
<evidence type="ECO:0000255" key="4">
    <source>
        <dbReference type="PROSITE-ProRule" id="PRU00379"/>
    </source>
</evidence>
<evidence type="ECO:0000269" key="5">
    <source>
    </source>
</evidence>
<evidence type="ECO:0000269" key="6">
    <source>
    </source>
</evidence>
<evidence type="ECO:0000269" key="7">
    <source>
    </source>
</evidence>
<evidence type="ECO:0000269" key="8">
    <source>
    </source>
</evidence>
<evidence type="ECO:0000269" key="9">
    <source>
    </source>
</evidence>
<evidence type="ECO:0000269" key="10">
    <source>
    </source>
</evidence>
<evidence type="ECO:0000269" key="11">
    <source>
    </source>
</evidence>
<evidence type="ECO:0000269" key="12">
    <source>
    </source>
</evidence>
<evidence type="ECO:0000269" key="13">
    <source>
    </source>
</evidence>
<evidence type="ECO:0000269" key="14">
    <source>
    </source>
</evidence>
<evidence type="ECO:0000269" key="15">
    <source>
    </source>
</evidence>
<evidence type="ECO:0007829" key="16">
    <source>
        <dbReference type="PDB" id="3KHO"/>
    </source>
</evidence>
<evidence type="ECO:0007829" key="17">
    <source>
        <dbReference type="PDB" id="3KHQ"/>
    </source>
</evidence>